<gene>
    <name evidence="1" type="primary">hcp</name>
    <name type="ordered locus">STY0933</name>
    <name type="ordered locus">t1996</name>
</gene>
<name>HCP_SALTI</name>
<proteinExistence type="inferred from homology"/>
<feature type="chain" id="PRO_0000151680" description="Hydroxylamine reductase">
    <location>
        <begin position="1"/>
        <end position="550"/>
    </location>
</feature>
<feature type="binding site" evidence="1">
    <location>
        <position position="3"/>
    </location>
    <ligand>
        <name>[2Fe-2S] cluster</name>
        <dbReference type="ChEBI" id="CHEBI:190135"/>
    </ligand>
</feature>
<feature type="binding site" evidence="1">
    <location>
        <position position="6"/>
    </location>
    <ligand>
        <name>[2Fe-2S] cluster</name>
        <dbReference type="ChEBI" id="CHEBI:190135"/>
    </ligand>
</feature>
<feature type="binding site" evidence="1">
    <location>
        <position position="18"/>
    </location>
    <ligand>
        <name>[2Fe-2S] cluster</name>
        <dbReference type="ChEBI" id="CHEBI:190135"/>
    </ligand>
</feature>
<feature type="binding site" evidence="1">
    <location>
        <position position="25"/>
    </location>
    <ligand>
        <name>[2Fe-2S] cluster</name>
        <dbReference type="ChEBI" id="CHEBI:190135"/>
    </ligand>
</feature>
<feature type="binding site" evidence="1">
    <location>
        <position position="249"/>
    </location>
    <ligand>
        <name>hybrid [4Fe-2O-2S] cluster</name>
        <dbReference type="ChEBI" id="CHEBI:60519"/>
    </ligand>
</feature>
<feature type="binding site" evidence="1">
    <location>
        <position position="273"/>
    </location>
    <ligand>
        <name>hybrid [4Fe-2O-2S] cluster</name>
        <dbReference type="ChEBI" id="CHEBI:60519"/>
    </ligand>
</feature>
<feature type="binding site" evidence="1">
    <location>
        <position position="317"/>
    </location>
    <ligand>
        <name>hybrid [4Fe-2O-2S] cluster</name>
        <dbReference type="ChEBI" id="CHEBI:60519"/>
    </ligand>
</feature>
<feature type="binding site" description="via persulfide group" evidence="1">
    <location>
        <position position="405"/>
    </location>
    <ligand>
        <name>hybrid [4Fe-2O-2S] cluster</name>
        <dbReference type="ChEBI" id="CHEBI:60519"/>
    </ligand>
</feature>
<feature type="binding site" evidence="1">
    <location>
        <position position="433"/>
    </location>
    <ligand>
        <name>hybrid [4Fe-2O-2S] cluster</name>
        <dbReference type="ChEBI" id="CHEBI:60519"/>
    </ligand>
</feature>
<feature type="binding site" evidence="1">
    <location>
        <position position="458"/>
    </location>
    <ligand>
        <name>hybrid [4Fe-2O-2S] cluster</name>
        <dbReference type="ChEBI" id="CHEBI:60519"/>
    </ligand>
</feature>
<feature type="binding site" evidence="1">
    <location>
        <position position="492"/>
    </location>
    <ligand>
        <name>hybrid [4Fe-2O-2S] cluster</name>
        <dbReference type="ChEBI" id="CHEBI:60519"/>
    </ligand>
</feature>
<feature type="binding site" evidence="1">
    <location>
        <position position="494"/>
    </location>
    <ligand>
        <name>hybrid [4Fe-2O-2S] cluster</name>
        <dbReference type="ChEBI" id="CHEBI:60519"/>
    </ligand>
</feature>
<feature type="modified residue" description="Cysteine persulfide" evidence="1">
    <location>
        <position position="405"/>
    </location>
</feature>
<organism>
    <name type="scientific">Salmonella typhi</name>
    <dbReference type="NCBI Taxonomy" id="90370"/>
    <lineage>
        <taxon>Bacteria</taxon>
        <taxon>Pseudomonadati</taxon>
        <taxon>Pseudomonadota</taxon>
        <taxon>Gammaproteobacteria</taxon>
        <taxon>Enterobacterales</taxon>
        <taxon>Enterobacteriaceae</taxon>
        <taxon>Salmonella</taxon>
    </lineage>
</organism>
<accession>Q8Z829</accession>
<protein>
    <recommendedName>
        <fullName evidence="1">Hydroxylamine reductase</fullName>
        <ecNumber evidence="1">1.7.99.1</ecNumber>
    </recommendedName>
    <alternativeName>
        <fullName evidence="1">Hybrid-cluster protein</fullName>
        <shortName evidence="1">HCP</shortName>
    </alternativeName>
    <alternativeName>
        <fullName evidence="1">Prismane protein</fullName>
    </alternativeName>
</protein>
<sequence length="550" mass="60134">MFCVQCEQTIRTPAGNGCSYAQGMCGKTAETSDLQDLLIAALQGLSAWAVKAREYGIINHDVDNFAPRAFFSTLTNVNFDSPRIVGYARDAIAMREALKAQCLSVDANAHCDNPMADLQLVSDDLGELQRQAAEFTPNKDKAAIGENILGLRLLCLYGLKGAAAYMEHAHVLGQYDNDIYAQYHKIMAWLGTWPADMNALLECAMEIGQMNFKVMSILDAGETTKYGHPTPTQVNVKATEGKCILISGHDLKDLYNLLEQTEGTGVNVYTHGEMLPAHGYPELRKFKHLVGNYGSGWQNQQVEFARFPGPIVMTSNCIIDPTVGSYDDRIWTRSIVGWPGVSHLEGDDFGPVIAQAQQMAGFPYSEIPHLITVGFGRQTLLGAADTLIDLVSREKLRHIFLVGGCDGARGERNYFTDFVTSVPDDCLILTLACGKYRFNKLEFGDIEGLPRLVDAGQCNDAYSAIILAVTLAEKLGCGVNDLPLSLVLSWFEQKAIVILLTLLSLGVKNIVTGPTAPGFFTPDLLAILNEKFGLRSVTTVEEDMKQLLSA</sequence>
<keyword id="KW-0001">2Fe-2S</keyword>
<keyword id="KW-0963">Cytoplasm</keyword>
<keyword id="KW-0408">Iron</keyword>
<keyword id="KW-0411">Iron-sulfur</keyword>
<keyword id="KW-0479">Metal-binding</keyword>
<keyword id="KW-0560">Oxidoreductase</keyword>
<reference key="1">
    <citation type="journal article" date="2001" name="Nature">
        <title>Complete genome sequence of a multiple drug resistant Salmonella enterica serovar Typhi CT18.</title>
        <authorList>
            <person name="Parkhill J."/>
            <person name="Dougan G."/>
            <person name="James K.D."/>
            <person name="Thomson N.R."/>
            <person name="Pickard D."/>
            <person name="Wain J."/>
            <person name="Churcher C.M."/>
            <person name="Mungall K.L."/>
            <person name="Bentley S.D."/>
            <person name="Holden M.T.G."/>
            <person name="Sebaihia M."/>
            <person name="Baker S."/>
            <person name="Basham D."/>
            <person name="Brooks K."/>
            <person name="Chillingworth T."/>
            <person name="Connerton P."/>
            <person name="Cronin A."/>
            <person name="Davis P."/>
            <person name="Davies R.M."/>
            <person name="Dowd L."/>
            <person name="White N."/>
            <person name="Farrar J."/>
            <person name="Feltwell T."/>
            <person name="Hamlin N."/>
            <person name="Haque A."/>
            <person name="Hien T.T."/>
            <person name="Holroyd S."/>
            <person name="Jagels K."/>
            <person name="Krogh A."/>
            <person name="Larsen T.S."/>
            <person name="Leather S."/>
            <person name="Moule S."/>
            <person name="O'Gaora P."/>
            <person name="Parry C."/>
            <person name="Quail M.A."/>
            <person name="Rutherford K.M."/>
            <person name="Simmonds M."/>
            <person name="Skelton J."/>
            <person name="Stevens K."/>
            <person name="Whitehead S."/>
            <person name="Barrell B.G."/>
        </authorList>
    </citation>
    <scope>NUCLEOTIDE SEQUENCE [LARGE SCALE GENOMIC DNA]</scope>
    <source>
        <strain>CT18</strain>
    </source>
</reference>
<reference key="2">
    <citation type="journal article" date="2003" name="J. Bacteriol.">
        <title>Comparative genomics of Salmonella enterica serovar Typhi strains Ty2 and CT18.</title>
        <authorList>
            <person name="Deng W."/>
            <person name="Liou S.-R."/>
            <person name="Plunkett G. III"/>
            <person name="Mayhew G.F."/>
            <person name="Rose D.J."/>
            <person name="Burland V."/>
            <person name="Kodoyianni V."/>
            <person name="Schwartz D.C."/>
            <person name="Blattner F.R."/>
        </authorList>
    </citation>
    <scope>NUCLEOTIDE SEQUENCE [LARGE SCALE GENOMIC DNA]</scope>
    <source>
        <strain>ATCC 700931 / Ty2</strain>
    </source>
</reference>
<dbReference type="EC" id="1.7.99.1" evidence="1"/>
<dbReference type="EMBL" id="AL513382">
    <property type="protein sequence ID" value="CAD05339.1"/>
    <property type="molecule type" value="Genomic_DNA"/>
</dbReference>
<dbReference type="EMBL" id="AE014613">
    <property type="protein sequence ID" value="AAO69608.1"/>
    <property type="molecule type" value="Genomic_DNA"/>
</dbReference>
<dbReference type="RefSeq" id="NP_455427.1">
    <property type="nucleotide sequence ID" value="NC_003198.1"/>
</dbReference>
<dbReference type="RefSeq" id="WP_000458773.1">
    <property type="nucleotide sequence ID" value="NZ_WSUR01000019.1"/>
</dbReference>
<dbReference type="SMR" id="Q8Z829"/>
<dbReference type="STRING" id="220341.gene:17584929"/>
<dbReference type="KEGG" id="stt:t1996"/>
<dbReference type="KEGG" id="sty:STY0933"/>
<dbReference type="PATRIC" id="fig|220341.7.peg.942"/>
<dbReference type="eggNOG" id="COG1151">
    <property type="taxonomic scope" value="Bacteria"/>
</dbReference>
<dbReference type="HOGENOM" id="CLU_038344_2_0_6"/>
<dbReference type="OMA" id="AYAQGMC"/>
<dbReference type="OrthoDB" id="9761526at2"/>
<dbReference type="Proteomes" id="UP000000541">
    <property type="component" value="Chromosome"/>
</dbReference>
<dbReference type="Proteomes" id="UP000002670">
    <property type="component" value="Chromosome"/>
</dbReference>
<dbReference type="GO" id="GO:0005737">
    <property type="term" value="C:cytoplasm"/>
    <property type="evidence" value="ECO:0007669"/>
    <property type="project" value="UniProtKB-SubCell"/>
</dbReference>
<dbReference type="GO" id="GO:0051537">
    <property type="term" value="F:2 iron, 2 sulfur cluster binding"/>
    <property type="evidence" value="ECO:0007669"/>
    <property type="project" value="UniProtKB-KW"/>
</dbReference>
<dbReference type="GO" id="GO:0050418">
    <property type="term" value="F:hydroxylamine reductase activity"/>
    <property type="evidence" value="ECO:0007669"/>
    <property type="project" value="UniProtKB-UniRule"/>
</dbReference>
<dbReference type="GO" id="GO:0046872">
    <property type="term" value="F:metal ion binding"/>
    <property type="evidence" value="ECO:0007669"/>
    <property type="project" value="UniProtKB-KW"/>
</dbReference>
<dbReference type="GO" id="GO:0004601">
    <property type="term" value="F:peroxidase activity"/>
    <property type="evidence" value="ECO:0007669"/>
    <property type="project" value="TreeGrafter"/>
</dbReference>
<dbReference type="GO" id="GO:0042542">
    <property type="term" value="P:response to hydrogen peroxide"/>
    <property type="evidence" value="ECO:0007669"/>
    <property type="project" value="TreeGrafter"/>
</dbReference>
<dbReference type="CDD" id="cd01914">
    <property type="entry name" value="HCP"/>
    <property type="match status" value="1"/>
</dbReference>
<dbReference type="FunFam" id="1.20.1270.20:FF:000001">
    <property type="entry name" value="Hydroxylamine reductase"/>
    <property type="match status" value="1"/>
</dbReference>
<dbReference type="FunFam" id="1.20.1270.20:FF:000002">
    <property type="entry name" value="Hydroxylamine reductase"/>
    <property type="match status" value="1"/>
</dbReference>
<dbReference type="FunFam" id="3.40.50.2030:FF:000001">
    <property type="entry name" value="Hydroxylamine reductase"/>
    <property type="match status" value="1"/>
</dbReference>
<dbReference type="FunFam" id="3.40.50.2030:FF:000002">
    <property type="entry name" value="Hydroxylamine reductase"/>
    <property type="match status" value="1"/>
</dbReference>
<dbReference type="Gene3D" id="1.20.1270.20">
    <property type="match status" value="2"/>
</dbReference>
<dbReference type="Gene3D" id="3.40.50.2030">
    <property type="match status" value="2"/>
</dbReference>
<dbReference type="HAMAP" id="MF_00069">
    <property type="entry name" value="Hydroxylam_reduct"/>
    <property type="match status" value="1"/>
</dbReference>
<dbReference type="InterPro" id="IPR004137">
    <property type="entry name" value="HCP/CODH"/>
</dbReference>
<dbReference type="InterPro" id="IPR010048">
    <property type="entry name" value="Hydroxylam_reduct"/>
</dbReference>
<dbReference type="InterPro" id="IPR016099">
    <property type="entry name" value="Prismane-like_a/b-sand"/>
</dbReference>
<dbReference type="InterPro" id="IPR011254">
    <property type="entry name" value="Prismane-like_sf"/>
</dbReference>
<dbReference type="InterPro" id="IPR016100">
    <property type="entry name" value="Prismane_a-bundle"/>
</dbReference>
<dbReference type="NCBIfam" id="TIGR01703">
    <property type="entry name" value="hybrid_clust"/>
    <property type="match status" value="1"/>
</dbReference>
<dbReference type="NCBIfam" id="NF003658">
    <property type="entry name" value="PRK05290.1"/>
    <property type="match status" value="1"/>
</dbReference>
<dbReference type="PANTHER" id="PTHR30109">
    <property type="entry name" value="HYDROXYLAMINE REDUCTASE"/>
    <property type="match status" value="1"/>
</dbReference>
<dbReference type="PANTHER" id="PTHR30109:SF0">
    <property type="entry name" value="HYDROXYLAMINE REDUCTASE"/>
    <property type="match status" value="1"/>
</dbReference>
<dbReference type="Pfam" id="PF03063">
    <property type="entry name" value="Prismane"/>
    <property type="match status" value="1"/>
</dbReference>
<dbReference type="PIRSF" id="PIRSF000076">
    <property type="entry name" value="HCP"/>
    <property type="match status" value="1"/>
</dbReference>
<dbReference type="SUPFAM" id="SSF56821">
    <property type="entry name" value="Prismane protein-like"/>
    <property type="match status" value="1"/>
</dbReference>
<evidence type="ECO:0000255" key="1">
    <source>
        <dbReference type="HAMAP-Rule" id="MF_00069"/>
    </source>
</evidence>
<comment type="function">
    <text evidence="1">Catalyzes the reduction of hydroxylamine to form NH(3) and H(2)O.</text>
</comment>
<comment type="catalytic activity">
    <reaction evidence="1">
        <text>A + NH4(+) + H2O = hydroxylamine + AH2 + H(+)</text>
        <dbReference type="Rhea" id="RHEA:22052"/>
        <dbReference type="ChEBI" id="CHEBI:13193"/>
        <dbReference type="ChEBI" id="CHEBI:15377"/>
        <dbReference type="ChEBI" id="CHEBI:15378"/>
        <dbReference type="ChEBI" id="CHEBI:15429"/>
        <dbReference type="ChEBI" id="CHEBI:17499"/>
        <dbReference type="ChEBI" id="CHEBI:28938"/>
        <dbReference type="EC" id="1.7.99.1"/>
    </reaction>
</comment>
<comment type="cofactor">
    <cofactor evidence="1">
        <name>[2Fe-2S] cluster</name>
        <dbReference type="ChEBI" id="CHEBI:190135"/>
    </cofactor>
    <text evidence="1">Binds 1 [2Fe-2S] cluster.</text>
</comment>
<comment type="cofactor">
    <cofactor evidence="1">
        <name>hybrid [4Fe-2O-2S] cluster</name>
        <dbReference type="ChEBI" id="CHEBI:60519"/>
    </cofactor>
    <text evidence="1">Binds 1 hybrid [4Fe-2O-2S] cluster.</text>
</comment>
<comment type="subcellular location">
    <subcellularLocation>
        <location evidence="1">Cytoplasm</location>
    </subcellularLocation>
</comment>
<comment type="similarity">
    <text evidence="1">Belongs to the HCP family.</text>
</comment>